<reference key="1">
    <citation type="journal article" date="2006" name="Genome Res.">
        <title>Skewed genomic variability in strains of the toxigenic bacterial pathogen, Clostridium perfringens.</title>
        <authorList>
            <person name="Myers G.S.A."/>
            <person name="Rasko D.A."/>
            <person name="Cheung J.K."/>
            <person name="Ravel J."/>
            <person name="Seshadri R."/>
            <person name="DeBoy R.T."/>
            <person name="Ren Q."/>
            <person name="Varga J."/>
            <person name="Awad M.M."/>
            <person name="Brinkac L.M."/>
            <person name="Daugherty S.C."/>
            <person name="Haft D.H."/>
            <person name="Dodson R.J."/>
            <person name="Madupu R."/>
            <person name="Nelson W.C."/>
            <person name="Rosovitz M.J."/>
            <person name="Sullivan S.A."/>
            <person name="Khouri H."/>
            <person name="Dimitrov G.I."/>
            <person name="Watkins K.L."/>
            <person name="Mulligan S."/>
            <person name="Benton J."/>
            <person name="Radune D."/>
            <person name="Fisher D.J."/>
            <person name="Atkins H.S."/>
            <person name="Hiscox T."/>
            <person name="Jost B.H."/>
            <person name="Billington S.J."/>
            <person name="Songer J.G."/>
            <person name="McClane B.A."/>
            <person name="Titball R.W."/>
            <person name="Rood J.I."/>
            <person name="Melville S.B."/>
            <person name="Paulsen I.T."/>
        </authorList>
    </citation>
    <scope>NUCLEOTIDE SEQUENCE [LARGE SCALE GENOMIC DNA]</scope>
    <source>
        <strain>ATCC 13124 / DSM 756 / JCM 1290 / NCIMB 6125 / NCTC 8237 / S 107 / Type A</strain>
    </source>
</reference>
<evidence type="ECO:0000255" key="1">
    <source>
        <dbReference type="HAMAP-Rule" id="MF_00309"/>
    </source>
</evidence>
<proteinExistence type="inferred from homology"/>
<name>VATA_CLOP1</name>
<dbReference type="EC" id="7.1.2.2" evidence="1"/>
<dbReference type="EMBL" id="CP000246">
    <property type="protein sequence ID" value="ABG82393.1"/>
    <property type="molecule type" value="Genomic_DNA"/>
</dbReference>
<dbReference type="RefSeq" id="WP_003449648.1">
    <property type="nucleotide sequence ID" value="NC_008261.1"/>
</dbReference>
<dbReference type="SMR" id="Q0TPW7"/>
<dbReference type="STRING" id="195103.CPF_1890"/>
<dbReference type="PaxDb" id="195103-CPF_1890"/>
<dbReference type="KEGG" id="cpf:CPF_1890"/>
<dbReference type="eggNOG" id="COG1155">
    <property type="taxonomic scope" value="Bacteria"/>
</dbReference>
<dbReference type="HOGENOM" id="CLU_008162_3_1_9"/>
<dbReference type="Proteomes" id="UP000001823">
    <property type="component" value="Chromosome"/>
</dbReference>
<dbReference type="GO" id="GO:0045259">
    <property type="term" value="C:proton-transporting ATP synthase complex"/>
    <property type="evidence" value="ECO:0007669"/>
    <property type="project" value="UniProtKB-ARBA"/>
</dbReference>
<dbReference type="GO" id="GO:0005524">
    <property type="term" value="F:ATP binding"/>
    <property type="evidence" value="ECO:0007669"/>
    <property type="project" value="UniProtKB-UniRule"/>
</dbReference>
<dbReference type="GO" id="GO:0046933">
    <property type="term" value="F:proton-transporting ATP synthase activity, rotational mechanism"/>
    <property type="evidence" value="ECO:0007669"/>
    <property type="project" value="UniProtKB-UniRule"/>
</dbReference>
<dbReference type="GO" id="GO:0046961">
    <property type="term" value="F:proton-transporting ATPase activity, rotational mechanism"/>
    <property type="evidence" value="ECO:0007669"/>
    <property type="project" value="InterPro"/>
</dbReference>
<dbReference type="GO" id="GO:0042777">
    <property type="term" value="P:proton motive force-driven plasma membrane ATP synthesis"/>
    <property type="evidence" value="ECO:0007669"/>
    <property type="project" value="UniProtKB-UniRule"/>
</dbReference>
<dbReference type="CDD" id="cd18111">
    <property type="entry name" value="ATP-synt_V_A-type_alpha_C"/>
    <property type="match status" value="1"/>
</dbReference>
<dbReference type="CDD" id="cd18119">
    <property type="entry name" value="ATP-synt_V_A-type_alpha_N"/>
    <property type="match status" value="1"/>
</dbReference>
<dbReference type="CDD" id="cd01134">
    <property type="entry name" value="V_A-ATPase_A"/>
    <property type="match status" value="1"/>
</dbReference>
<dbReference type="FunFam" id="2.40.30.20:FF:000002">
    <property type="entry name" value="V-type proton ATPase catalytic subunit A"/>
    <property type="match status" value="1"/>
</dbReference>
<dbReference type="FunFam" id="2.40.50.100:FF:000008">
    <property type="entry name" value="V-type proton ATPase catalytic subunit A"/>
    <property type="match status" value="1"/>
</dbReference>
<dbReference type="Gene3D" id="2.40.30.20">
    <property type="match status" value="1"/>
</dbReference>
<dbReference type="Gene3D" id="2.40.50.100">
    <property type="match status" value="1"/>
</dbReference>
<dbReference type="Gene3D" id="1.10.1140.10">
    <property type="entry name" value="Bovine Mitochondrial F1-atpase, Atp Synthase Beta Chain, Chain D, domain 3"/>
    <property type="match status" value="1"/>
</dbReference>
<dbReference type="Gene3D" id="3.40.50.300">
    <property type="entry name" value="P-loop containing nucleotide triphosphate hydrolases"/>
    <property type="match status" value="1"/>
</dbReference>
<dbReference type="HAMAP" id="MF_00309">
    <property type="entry name" value="ATP_synth_A_arch"/>
    <property type="match status" value="1"/>
</dbReference>
<dbReference type="InterPro" id="IPR055190">
    <property type="entry name" value="ATP-synt_VA_C"/>
</dbReference>
<dbReference type="InterPro" id="IPR031686">
    <property type="entry name" value="ATP-synth_a_Xtn"/>
</dbReference>
<dbReference type="InterPro" id="IPR023366">
    <property type="entry name" value="ATP_synth_asu-like_sf"/>
</dbReference>
<dbReference type="InterPro" id="IPR020003">
    <property type="entry name" value="ATPase_a/bsu_AS"/>
</dbReference>
<dbReference type="InterPro" id="IPR004100">
    <property type="entry name" value="ATPase_F1/V1/A1_a/bsu_N"/>
</dbReference>
<dbReference type="InterPro" id="IPR036121">
    <property type="entry name" value="ATPase_F1/V1/A1_a/bsu_N_sf"/>
</dbReference>
<dbReference type="InterPro" id="IPR000194">
    <property type="entry name" value="ATPase_F1/V1/A1_a/bsu_nucl-bd"/>
</dbReference>
<dbReference type="InterPro" id="IPR024034">
    <property type="entry name" value="ATPase_F1/V1_b/a_C"/>
</dbReference>
<dbReference type="InterPro" id="IPR027417">
    <property type="entry name" value="P-loop_NTPase"/>
</dbReference>
<dbReference type="InterPro" id="IPR022878">
    <property type="entry name" value="V-ATPase_asu"/>
</dbReference>
<dbReference type="NCBIfam" id="NF003220">
    <property type="entry name" value="PRK04192.1"/>
    <property type="match status" value="1"/>
</dbReference>
<dbReference type="PANTHER" id="PTHR43607:SF1">
    <property type="entry name" value="H(+)-TRANSPORTING TWO-SECTOR ATPASE"/>
    <property type="match status" value="1"/>
</dbReference>
<dbReference type="PANTHER" id="PTHR43607">
    <property type="entry name" value="V-TYPE PROTON ATPASE CATALYTIC SUBUNIT A"/>
    <property type="match status" value="1"/>
</dbReference>
<dbReference type="Pfam" id="PF00006">
    <property type="entry name" value="ATP-synt_ab"/>
    <property type="match status" value="1"/>
</dbReference>
<dbReference type="Pfam" id="PF02874">
    <property type="entry name" value="ATP-synt_ab_N"/>
    <property type="match status" value="1"/>
</dbReference>
<dbReference type="Pfam" id="PF16886">
    <property type="entry name" value="ATP-synt_ab_Xtn"/>
    <property type="match status" value="1"/>
</dbReference>
<dbReference type="Pfam" id="PF22919">
    <property type="entry name" value="ATP-synt_VA_C"/>
    <property type="match status" value="1"/>
</dbReference>
<dbReference type="SUPFAM" id="SSF47917">
    <property type="entry name" value="C-terminal domain of alpha and beta subunits of F1 ATP synthase"/>
    <property type="match status" value="1"/>
</dbReference>
<dbReference type="SUPFAM" id="SSF50615">
    <property type="entry name" value="N-terminal domain of alpha and beta subunits of F1 ATP synthase"/>
    <property type="match status" value="1"/>
</dbReference>
<dbReference type="SUPFAM" id="SSF52540">
    <property type="entry name" value="P-loop containing nucleoside triphosphate hydrolases"/>
    <property type="match status" value="1"/>
</dbReference>
<dbReference type="PROSITE" id="PS00152">
    <property type="entry name" value="ATPASE_ALPHA_BETA"/>
    <property type="match status" value="1"/>
</dbReference>
<protein>
    <recommendedName>
        <fullName evidence="1">V-type ATP synthase alpha chain</fullName>
        <ecNumber evidence="1">7.1.2.2</ecNumber>
    </recommendedName>
    <alternativeName>
        <fullName evidence="1">V-ATPase subunit A</fullName>
    </alternativeName>
</protein>
<comment type="function">
    <text evidence="1">Produces ATP from ADP in the presence of a proton gradient across the membrane. The V-type alpha chain is a catalytic subunit.</text>
</comment>
<comment type="catalytic activity">
    <reaction evidence="1">
        <text>ATP + H2O + 4 H(+)(in) = ADP + phosphate + 5 H(+)(out)</text>
        <dbReference type="Rhea" id="RHEA:57720"/>
        <dbReference type="ChEBI" id="CHEBI:15377"/>
        <dbReference type="ChEBI" id="CHEBI:15378"/>
        <dbReference type="ChEBI" id="CHEBI:30616"/>
        <dbReference type="ChEBI" id="CHEBI:43474"/>
        <dbReference type="ChEBI" id="CHEBI:456216"/>
        <dbReference type="EC" id="7.1.2.2"/>
    </reaction>
</comment>
<comment type="similarity">
    <text evidence="1">Belongs to the ATPase alpha/beta chains family.</text>
</comment>
<gene>
    <name evidence="1" type="primary">atpA</name>
    <name type="ordered locus">CPF_1890</name>
</gene>
<keyword id="KW-0066">ATP synthesis</keyword>
<keyword id="KW-0067">ATP-binding</keyword>
<keyword id="KW-0375">Hydrogen ion transport</keyword>
<keyword id="KW-0406">Ion transport</keyword>
<keyword id="KW-0547">Nucleotide-binding</keyword>
<keyword id="KW-1278">Translocase</keyword>
<keyword id="KW-0813">Transport</keyword>
<accession>Q0TPW7</accession>
<organism>
    <name type="scientific">Clostridium perfringens (strain ATCC 13124 / DSM 756 / JCM 1290 / NCIMB 6125 / NCTC 8237 / Type A)</name>
    <dbReference type="NCBI Taxonomy" id="195103"/>
    <lineage>
        <taxon>Bacteria</taxon>
        <taxon>Bacillati</taxon>
        <taxon>Bacillota</taxon>
        <taxon>Clostridia</taxon>
        <taxon>Eubacteriales</taxon>
        <taxon>Clostridiaceae</taxon>
        <taxon>Clostridium</taxon>
    </lineage>
</organism>
<feature type="chain" id="PRO_1000059337" description="V-type ATP synthase alpha chain">
    <location>
        <begin position="1"/>
        <end position="591"/>
    </location>
</feature>
<feature type="binding site" evidence="1">
    <location>
        <begin position="232"/>
        <end position="239"/>
    </location>
    <ligand>
        <name>ATP</name>
        <dbReference type="ChEBI" id="CHEBI:30616"/>
    </ligand>
</feature>
<sequence>MKTGKIIKVSGPLVVAEGMDEANVYDVVKVGEKGLIGEIIEMRGDKASIQVYEETSGIGPGDPVITTGEPLSVELGPGLIESMFDGIQRPLDAFMKAANSAFLSKGVEVKSLNREKKWPFVPTAKVGDKVSAGDVIGTVQETAVVLHRIMVPFGVEGTIKEIKAGDFNVEEVIAVVETEKGDKNLTLMQKWPVRKGRPYARKLNPVEPMTTGQRVIDTFFPVAKGGAAAVPGPFGAGKTVVQHQVAKWGDTEIVVYVGCGERGNEMTDVLNEFPELKDPKTGESLMKRTVLIANTSNMPVAAREASIYTGITIAEYFRDMGYSVSIMADSTSRWAEALREMSGRLEEMPGDEGYPAYLGSRLADYYERAGKVVALGKDGREGAVTAIGAVSPPGGDISEPVTQSTLRIVKVFWGLDAQLAYKRHFPSINWLTSYSLYLEKMGEWMDAHVADDWSALRTEAMALLQEEANLEEIVRLVGMDALSEGDRLKLEVAKSIREDYLQQNAFHENDTYTSLNKQYKMLNLILSFKHEAEKALEAGVYLDKVLKLPVRDRIARSKYISEEEISKMDDILVELKSEMNKLISEGGVLNA</sequence>